<accession>Q9K921</accession>
<reference key="1">
    <citation type="journal article" date="2000" name="Nucleic Acids Res.">
        <title>Complete genome sequence of the alkaliphilic bacterium Bacillus halodurans and genomic sequence comparison with Bacillus subtilis.</title>
        <authorList>
            <person name="Takami H."/>
            <person name="Nakasone K."/>
            <person name="Takaki Y."/>
            <person name="Maeno G."/>
            <person name="Sasaki R."/>
            <person name="Masui N."/>
            <person name="Fuji F."/>
            <person name="Hirama C."/>
            <person name="Nakamura Y."/>
            <person name="Ogasawara N."/>
            <person name="Kuhara S."/>
            <person name="Horikoshi K."/>
        </authorList>
    </citation>
    <scope>NUCLEOTIDE SEQUENCE [LARGE SCALE GENOMIC DNA]</scope>
    <source>
        <strain>ATCC BAA-125 / DSM 18197 / FERM 7344 / JCM 9153 / C-125</strain>
    </source>
</reference>
<feature type="chain" id="PRO_0000171792" description="Putative membrane protein insertion efficiency factor">
    <location>
        <begin position="1"/>
        <end position="75"/>
    </location>
</feature>
<gene>
    <name type="ordered locus">BH2828</name>
</gene>
<comment type="function">
    <text evidence="1">Could be involved in insertion of integral membrane proteins into the membrane.</text>
</comment>
<comment type="subcellular location">
    <subcellularLocation>
        <location evidence="1">Cell membrane</location>
        <topology evidence="1">Peripheral membrane protein</topology>
        <orientation evidence="1">Cytoplasmic side</orientation>
    </subcellularLocation>
</comment>
<comment type="similarity">
    <text evidence="1">Belongs to the UPF0161 family.</text>
</comment>
<dbReference type="EMBL" id="BA000004">
    <property type="protein sequence ID" value="BAB06548.1"/>
    <property type="molecule type" value="Genomic_DNA"/>
</dbReference>
<dbReference type="PIR" id="E84003">
    <property type="entry name" value="E84003"/>
</dbReference>
<dbReference type="RefSeq" id="WP_010898977.1">
    <property type="nucleotide sequence ID" value="NC_002570.2"/>
</dbReference>
<dbReference type="STRING" id="272558.gene:10728729"/>
<dbReference type="GeneID" id="87598348"/>
<dbReference type="KEGG" id="bha:BH2828"/>
<dbReference type="eggNOG" id="COG0759">
    <property type="taxonomic scope" value="Bacteria"/>
</dbReference>
<dbReference type="HOGENOM" id="CLU_144811_6_0_9"/>
<dbReference type="Proteomes" id="UP000001258">
    <property type="component" value="Chromosome"/>
</dbReference>
<dbReference type="GO" id="GO:0005886">
    <property type="term" value="C:plasma membrane"/>
    <property type="evidence" value="ECO:0007669"/>
    <property type="project" value="UniProtKB-SubCell"/>
</dbReference>
<dbReference type="HAMAP" id="MF_00386">
    <property type="entry name" value="UPF0161_YidD"/>
    <property type="match status" value="1"/>
</dbReference>
<dbReference type="InterPro" id="IPR002696">
    <property type="entry name" value="Membr_insert_effic_factor_YidD"/>
</dbReference>
<dbReference type="NCBIfam" id="TIGR00278">
    <property type="entry name" value="membrane protein insertion efficiency factor YidD"/>
    <property type="match status" value="1"/>
</dbReference>
<dbReference type="PANTHER" id="PTHR33383">
    <property type="entry name" value="MEMBRANE PROTEIN INSERTION EFFICIENCY FACTOR-RELATED"/>
    <property type="match status" value="1"/>
</dbReference>
<dbReference type="PANTHER" id="PTHR33383:SF1">
    <property type="entry name" value="MEMBRANE PROTEIN INSERTION EFFICIENCY FACTOR-RELATED"/>
    <property type="match status" value="1"/>
</dbReference>
<dbReference type="Pfam" id="PF01809">
    <property type="entry name" value="YidD"/>
    <property type="match status" value="1"/>
</dbReference>
<dbReference type="SMART" id="SM01234">
    <property type="entry name" value="Haemolytic"/>
    <property type="match status" value="1"/>
</dbReference>
<sequence>MKRFFIGCIRLYQKFISPLTPPTCRFYPTCSHYGIEAIQRFGVLKGGWLTIKRISKCHPFHRGGIDPVPEKKQEK</sequence>
<name>YIDD_HALH5</name>
<proteinExistence type="inferred from homology"/>
<keyword id="KW-1003">Cell membrane</keyword>
<keyword id="KW-0472">Membrane</keyword>
<keyword id="KW-1185">Reference proteome</keyword>
<protein>
    <recommendedName>
        <fullName evidence="1">Putative membrane protein insertion efficiency factor</fullName>
    </recommendedName>
</protein>
<evidence type="ECO:0000255" key="1">
    <source>
        <dbReference type="HAMAP-Rule" id="MF_00386"/>
    </source>
</evidence>
<organism>
    <name type="scientific">Halalkalibacterium halodurans (strain ATCC BAA-125 / DSM 18197 / FERM 7344 / JCM 9153 / C-125)</name>
    <name type="common">Bacillus halodurans</name>
    <dbReference type="NCBI Taxonomy" id="272558"/>
    <lineage>
        <taxon>Bacteria</taxon>
        <taxon>Bacillati</taxon>
        <taxon>Bacillota</taxon>
        <taxon>Bacilli</taxon>
        <taxon>Bacillales</taxon>
        <taxon>Bacillaceae</taxon>
        <taxon>Halalkalibacterium (ex Joshi et al. 2022)</taxon>
    </lineage>
</organism>